<keyword id="KW-1185">Reference proteome</keyword>
<keyword id="KW-0687">Ribonucleoprotein</keyword>
<keyword id="KW-0689">Ribosomal protein</keyword>
<keyword id="KW-0694">RNA-binding</keyword>
<keyword id="KW-0699">rRNA-binding</keyword>
<name>RL21_MYCPU</name>
<dbReference type="EMBL" id="AL445564">
    <property type="protein sequence ID" value="CAC13503.1"/>
    <property type="status" value="ALT_INIT"/>
    <property type="molecule type" value="Genomic_DNA"/>
</dbReference>
<dbReference type="PIR" id="B90553">
    <property type="entry name" value="B90553"/>
</dbReference>
<dbReference type="RefSeq" id="WP_010925134.1">
    <property type="nucleotide sequence ID" value="NC_002771.1"/>
</dbReference>
<dbReference type="SMR" id="Q98QN1"/>
<dbReference type="STRING" id="272635.gene:17576921"/>
<dbReference type="KEGG" id="mpu:MYPU_3300"/>
<dbReference type="eggNOG" id="COG0261">
    <property type="taxonomic scope" value="Bacteria"/>
</dbReference>
<dbReference type="HOGENOM" id="CLU_061463_3_1_14"/>
<dbReference type="BioCyc" id="MPUL272635:G1GT6-330-MONOMER"/>
<dbReference type="Proteomes" id="UP000000528">
    <property type="component" value="Chromosome"/>
</dbReference>
<dbReference type="GO" id="GO:0005737">
    <property type="term" value="C:cytoplasm"/>
    <property type="evidence" value="ECO:0007669"/>
    <property type="project" value="UniProtKB-ARBA"/>
</dbReference>
<dbReference type="GO" id="GO:1990904">
    <property type="term" value="C:ribonucleoprotein complex"/>
    <property type="evidence" value="ECO:0007669"/>
    <property type="project" value="UniProtKB-KW"/>
</dbReference>
<dbReference type="GO" id="GO:0005840">
    <property type="term" value="C:ribosome"/>
    <property type="evidence" value="ECO:0007669"/>
    <property type="project" value="UniProtKB-KW"/>
</dbReference>
<dbReference type="GO" id="GO:0019843">
    <property type="term" value="F:rRNA binding"/>
    <property type="evidence" value="ECO:0007669"/>
    <property type="project" value="UniProtKB-UniRule"/>
</dbReference>
<dbReference type="GO" id="GO:0003735">
    <property type="term" value="F:structural constituent of ribosome"/>
    <property type="evidence" value="ECO:0007669"/>
    <property type="project" value="InterPro"/>
</dbReference>
<dbReference type="GO" id="GO:0006412">
    <property type="term" value="P:translation"/>
    <property type="evidence" value="ECO:0007669"/>
    <property type="project" value="UniProtKB-UniRule"/>
</dbReference>
<dbReference type="HAMAP" id="MF_01363">
    <property type="entry name" value="Ribosomal_bL21"/>
    <property type="match status" value="1"/>
</dbReference>
<dbReference type="InterPro" id="IPR028909">
    <property type="entry name" value="bL21-like"/>
</dbReference>
<dbReference type="InterPro" id="IPR036164">
    <property type="entry name" value="bL21-like_sf"/>
</dbReference>
<dbReference type="InterPro" id="IPR001787">
    <property type="entry name" value="Ribosomal_bL21"/>
</dbReference>
<dbReference type="NCBIfam" id="TIGR00061">
    <property type="entry name" value="L21"/>
    <property type="match status" value="1"/>
</dbReference>
<dbReference type="PANTHER" id="PTHR21349">
    <property type="entry name" value="50S RIBOSOMAL PROTEIN L21"/>
    <property type="match status" value="1"/>
</dbReference>
<dbReference type="PANTHER" id="PTHR21349:SF0">
    <property type="entry name" value="LARGE RIBOSOMAL SUBUNIT PROTEIN BL21M"/>
    <property type="match status" value="1"/>
</dbReference>
<dbReference type="Pfam" id="PF00829">
    <property type="entry name" value="Ribosomal_L21p"/>
    <property type="match status" value="1"/>
</dbReference>
<dbReference type="SUPFAM" id="SSF141091">
    <property type="entry name" value="L21p-like"/>
    <property type="match status" value="1"/>
</dbReference>
<proteinExistence type="inferred from homology"/>
<evidence type="ECO:0000255" key="1">
    <source>
        <dbReference type="HAMAP-Rule" id="MF_01363"/>
    </source>
</evidence>
<evidence type="ECO:0000305" key="2"/>
<protein>
    <recommendedName>
        <fullName evidence="1">Large ribosomal subunit protein bL21</fullName>
    </recommendedName>
    <alternativeName>
        <fullName evidence="2">50S ribosomal protein L21</fullName>
    </alternativeName>
</protein>
<sequence>MYAIIEVGGKQLLVKEQEVIFTEKIEGNAGEKVEFDKVLLFGDKVGRPYLEKVKVIGEIQKQSKHKKIIVYRHNAKSTHKRKLGHRQPYTRVKILEIKG</sequence>
<reference key="1">
    <citation type="journal article" date="2001" name="Nucleic Acids Res.">
        <title>The complete genome sequence of the murine respiratory pathogen Mycoplasma pulmonis.</title>
        <authorList>
            <person name="Chambaud I."/>
            <person name="Heilig R."/>
            <person name="Ferris S."/>
            <person name="Barbe V."/>
            <person name="Samson D."/>
            <person name="Galisson F."/>
            <person name="Moszer I."/>
            <person name="Dybvig K."/>
            <person name="Wroblewski H."/>
            <person name="Viari A."/>
            <person name="Rocha E.P.C."/>
            <person name="Blanchard A."/>
        </authorList>
    </citation>
    <scope>NUCLEOTIDE SEQUENCE [LARGE SCALE GENOMIC DNA]</scope>
    <source>
        <strain>UAB CTIP</strain>
    </source>
</reference>
<organism>
    <name type="scientific">Mycoplasmopsis pulmonis (strain UAB CTIP)</name>
    <name type="common">Mycoplasma pulmonis</name>
    <dbReference type="NCBI Taxonomy" id="272635"/>
    <lineage>
        <taxon>Bacteria</taxon>
        <taxon>Bacillati</taxon>
        <taxon>Mycoplasmatota</taxon>
        <taxon>Mycoplasmoidales</taxon>
        <taxon>Metamycoplasmataceae</taxon>
        <taxon>Mycoplasmopsis</taxon>
    </lineage>
</organism>
<accession>Q98QN1</accession>
<comment type="function">
    <text evidence="1">This protein binds to 23S rRNA in the presence of protein L20.</text>
</comment>
<comment type="subunit">
    <text evidence="1">Part of the 50S ribosomal subunit. Contacts protein L20.</text>
</comment>
<comment type="similarity">
    <text evidence="1">Belongs to the bacterial ribosomal protein bL21 family.</text>
</comment>
<comment type="sequence caution" evidence="2">
    <conflict type="erroneous initiation">
        <sequence resource="EMBL-CDS" id="CAC13503"/>
    </conflict>
</comment>
<feature type="chain" id="PRO_0000270694" description="Large ribosomal subunit protein bL21">
    <location>
        <begin position="1"/>
        <end position="99"/>
    </location>
</feature>
<gene>
    <name evidence="1" type="primary">rplU</name>
    <name type="ordered locus">MYPU_3300</name>
</gene>